<organism>
    <name type="scientific">Bacillus cereus (strain G9842)</name>
    <dbReference type="NCBI Taxonomy" id="405531"/>
    <lineage>
        <taxon>Bacteria</taxon>
        <taxon>Bacillati</taxon>
        <taxon>Bacillota</taxon>
        <taxon>Bacilli</taxon>
        <taxon>Bacillales</taxon>
        <taxon>Bacillaceae</taxon>
        <taxon>Bacillus</taxon>
        <taxon>Bacillus cereus group</taxon>
    </lineage>
</organism>
<keyword id="KW-0030">Aminoacyl-tRNA synthetase</keyword>
<keyword id="KW-0067">ATP-binding</keyword>
<keyword id="KW-0963">Cytoplasm</keyword>
<keyword id="KW-0436">Ligase</keyword>
<keyword id="KW-0547">Nucleotide-binding</keyword>
<keyword id="KW-0648">Protein biosynthesis</keyword>
<reference key="1">
    <citation type="submission" date="2008-10" db="EMBL/GenBank/DDBJ databases">
        <title>Genome sequence of Bacillus cereus G9842.</title>
        <authorList>
            <person name="Dodson R.J."/>
            <person name="Durkin A.S."/>
            <person name="Rosovitz M.J."/>
            <person name="Rasko D.A."/>
            <person name="Hoffmaster A."/>
            <person name="Ravel J."/>
            <person name="Sutton G."/>
        </authorList>
    </citation>
    <scope>NUCLEOTIDE SEQUENCE [LARGE SCALE GENOMIC DNA]</scope>
    <source>
        <strain>G9842</strain>
    </source>
</reference>
<accession>B7IS31</accession>
<comment type="function">
    <text evidence="1">Catalyzes the attachment of serine to tRNA(Ser). Is also able to aminoacylate tRNA(Sec) with serine, to form the misacylated tRNA L-seryl-tRNA(Sec), which will be further converted into selenocysteinyl-tRNA(Sec).</text>
</comment>
<comment type="catalytic activity">
    <reaction evidence="1">
        <text>tRNA(Ser) + L-serine + ATP = L-seryl-tRNA(Ser) + AMP + diphosphate + H(+)</text>
        <dbReference type="Rhea" id="RHEA:12292"/>
        <dbReference type="Rhea" id="RHEA-COMP:9669"/>
        <dbReference type="Rhea" id="RHEA-COMP:9703"/>
        <dbReference type="ChEBI" id="CHEBI:15378"/>
        <dbReference type="ChEBI" id="CHEBI:30616"/>
        <dbReference type="ChEBI" id="CHEBI:33019"/>
        <dbReference type="ChEBI" id="CHEBI:33384"/>
        <dbReference type="ChEBI" id="CHEBI:78442"/>
        <dbReference type="ChEBI" id="CHEBI:78533"/>
        <dbReference type="ChEBI" id="CHEBI:456215"/>
        <dbReference type="EC" id="6.1.1.11"/>
    </reaction>
</comment>
<comment type="catalytic activity">
    <reaction evidence="1">
        <text>tRNA(Sec) + L-serine + ATP = L-seryl-tRNA(Sec) + AMP + diphosphate + H(+)</text>
        <dbReference type="Rhea" id="RHEA:42580"/>
        <dbReference type="Rhea" id="RHEA-COMP:9742"/>
        <dbReference type="Rhea" id="RHEA-COMP:10128"/>
        <dbReference type="ChEBI" id="CHEBI:15378"/>
        <dbReference type="ChEBI" id="CHEBI:30616"/>
        <dbReference type="ChEBI" id="CHEBI:33019"/>
        <dbReference type="ChEBI" id="CHEBI:33384"/>
        <dbReference type="ChEBI" id="CHEBI:78442"/>
        <dbReference type="ChEBI" id="CHEBI:78533"/>
        <dbReference type="ChEBI" id="CHEBI:456215"/>
        <dbReference type="EC" id="6.1.1.11"/>
    </reaction>
</comment>
<comment type="pathway">
    <text evidence="1">Aminoacyl-tRNA biosynthesis; selenocysteinyl-tRNA(Sec) biosynthesis; L-seryl-tRNA(Sec) from L-serine and tRNA(Sec): step 1/1.</text>
</comment>
<comment type="subunit">
    <text evidence="1">Homodimer. The tRNA molecule binds across the dimer.</text>
</comment>
<comment type="subcellular location">
    <subcellularLocation>
        <location evidence="1">Cytoplasm</location>
    </subcellularLocation>
</comment>
<comment type="domain">
    <text evidence="1">Consists of two distinct domains, a catalytic core and a N-terminal extension that is involved in tRNA binding.</text>
</comment>
<comment type="similarity">
    <text evidence="1">Belongs to the class-II aminoacyl-tRNA synthetase family. Type-1 seryl-tRNA synthetase subfamily.</text>
</comment>
<gene>
    <name evidence="1" type="primary">serS</name>
    <name type="ordered locus">BCG9842_B5302</name>
</gene>
<feature type="chain" id="PRO_1000199466" description="Serine--tRNA ligase">
    <location>
        <begin position="1"/>
        <end position="424"/>
    </location>
</feature>
<feature type="binding site" evidence="1">
    <location>
        <begin position="231"/>
        <end position="233"/>
    </location>
    <ligand>
        <name>L-serine</name>
        <dbReference type="ChEBI" id="CHEBI:33384"/>
    </ligand>
</feature>
<feature type="binding site" evidence="1">
    <location>
        <begin position="262"/>
        <end position="264"/>
    </location>
    <ligand>
        <name>ATP</name>
        <dbReference type="ChEBI" id="CHEBI:30616"/>
    </ligand>
</feature>
<feature type="binding site" evidence="1">
    <location>
        <position position="285"/>
    </location>
    <ligand>
        <name>L-serine</name>
        <dbReference type="ChEBI" id="CHEBI:33384"/>
    </ligand>
</feature>
<feature type="binding site" evidence="1">
    <location>
        <begin position="349"/>
        <end position="352"/>
    </location>
    <ligand>
        <name>ATP</name>
        <dbReference type="ChEBI" id="CHEBI:30616"/>
    </ligand>
</feature>
<feature type="binding site" evidence="1">
    <location>
        <position position="385"/>
    </location>
    <ligand>
        <name>L-serine</name>
        <dbReference type="ChEBI" id="CHEBI:33384"/>
    </ligand>
</feature>
<protein>
    <recommendedName>
        <fullName evidence="1">Serine--tRNA ligase</fullName>
        <ecNumber evidence="1">6.1.1.11</ecNumber>
    </recommendedName>
    <alternativeName>
        <fullName evidence="1">Seryl-tRNA synthetase</fullName>
        <shortName evidence="1">SerRS</shortName>
    </alternativeName>
    <alternativeName>
        <fullName evidence="1">Seryl-tRNA(Ser/Sec) synthetase</fullName>
    </alternativeName>
</protein>
<evidence type="ECO:0000255" key="1">
    <source>
        <dbReference type="HAMAP-Rule" id="MF_00176"/>
    </source>
</evidence>
<dbReference type="EC" id="6.1.1.11" evidence="1"/>
<dbReference type="EMBL" id="CP001186">
    <property type="protein sequence ID" value="ACK98137.1"/>
    <property type="molecule type" value="Genomic_DNA"/>
</dbReference>
<dbReference type="RefSeq" id="WP_000884174.1">
    <property type="nucleotide sequence ID" value="NC_011772.1"/>
</dbReference>
<dbReference type="SMR" id="B7IS31"/>
<dbReference type="GeneID" id="72446811"/>
<dbReference type="KEGG" id="bcg:BCG9842_B5302"/>
<dbReference type="HOGENOM" id="CLU_023797_1_1_9"/>
<dbReference type="UniPathway" id="UPA00906">
    <property type="reaction ID" value="UER00895"/>
</dbReference>
<dbReference type="Proteomes" id="UP000006744">
    <property type="component" value="Chromosome"/>
</dbReference>
<dbReference type="GO" id="GO:0005737">
    <property type="term" value="C:cytoplasm"/>
    <property type="evidence" value="ECO:0007669"/>
    <property type="project" value="UniProtKB-SubCell"/>
</dbReference>
<dbReference type="GO" id="GO:0005524">
    <property type="term" value="F:ATP binding"/>
    <property type="evidence" value="ECO:0007669"/>
    <property type="project" value="UniProtKB-UniRule"/>
</dbReference>
<dbReference type="GO" id="GO:0140096">
    <property type="term" value="F:catalytic activity, acting on a protein"/>
    <property type="evidence" value="ECO:0007669"/>
    <property type="project" value="UniProtKB-ARBA"/>
</dbReference>
<dbReference type="GO" id="GO:0004828">
    <property type="term" value="F:serine-tRNA ligase activity"/>
    <property type="evidence" value="ECO:0007669"/>
    <property type="project" value="UniProtKB-UniRule"/>
</dbReference>
<dbReference type="GO" id="GO:0016740">
    <property type="term" value="F:transferase activity"/>
    <property type="evidence" value="ECO:0007669"/>
    <property type="project" value="UniProtKB-ARBA"/>
</dbReference>
<dbReference type="GO" id="GO:0016260">
    <property type="term" value="P:selenocysteine biosynthetic process"/>
    <property type="evidence" value="ECO:0007669"/>
    <property type="project" value="UniProtKB-UniRule"/>
</dbReference>
<dbReference type="GO" id="GO:0006434">
    <property type="term" value="P:seryl-tRNA aminoacylation"/>
    <property type="evidence" value="ECO:0007669"/>
    <property type="project" value="UniProtKB-UniRule"/>
</dbReference>
<dbReference type="CDD" id="cd00770">
    <property type="entry name" value="SerRS_core"/>
    <property type="match status" value="1"/>
</dbReference>
<dbReference type="Gene3D" id="3.30.930.10">
    <property type="entry name" value="Bira Bifunctional Protein, Domain 2"/>
    <property type="match status" value="1"/>
</dbReference>
<dbReference type="Gene3D" id="1.10.287.40">
    <property type="entry name" value="Serine-tRNA synthetase, tRNA binding domain"/>
    <property type="match status" value="1"/>
</dbReference>
<dbReference type="HAMAP" id="MF_00176">
    <property type="entry name" value="Ser_tRNA_synth_type1"/>
    <property type="match status" value="1"/>
</dbReference>
<dbReference type="InterPro" id="IPR002314">
    <property type="entry name" value="aa-tRNA-synt_IIb"/>
</dbReference>
<dbReference type="InterPro" id="IPR006195">
    <property type="entry name" value="aa-tRNA-synth_II"/>
</dbReference>
<dbReference type="InterPro" id="IPR045864">
    <property type="entry name" value="aa-tRNA-synth_II/BPL/LPL"/>
</dbReference>
<dbReference type="InterPro" id="IPR002317">
    <property type="entry name" value="Ser-tRNA-ligase_type_1"/>
</dbReference>
<dbReference type="InterPro" id="IPR015866">
    <property type="entry name" value="Ser-tRNA-synth_1_N"/>
</dbReference>
<dbReference type="InterPro" id="IPR042103">
    <property type="entry name" value="SerRS_1_N_sf"/>
</dbReference>
<dbReference type="InterPro" id="IPR033729">
    <property type="entry name" value="SerRS_core"/>
</dbReference>
<dbReference type="InterPro" id="IPR010978">
    <property type="entry name" value="tRNA-bd_arm"/>
</dbReference>
<dbReference type="NCBIfam" id="TIGR00414">
    <property type="entry name" value="serS"/>
    <property type="match status" value="1"/>
</dbReference>
<dbReference type="PANTHER" id="PTHR43697:SF1">
    <property type="entry name" value="SERINE--TRNA LIGASE"/>
    <property type="match status" value="1"/>
</dbReference>
<dbReference type="PANTHER" id="PTHR43697">
    <property type="entry name" value="SERYL-TRNA SYNTHETASE"/>
    <property type="match status" value="1"/>
</dbReference>
<dbReference type="Pfam" id="PF02403">
    <property type="entry name" value="Seryl_tRNA_N"/>
    <property type="match status" value="1"/>
</dbReference>
<dbReference type="Pfam" id="PF00587">
    <property type="entry name" value="tRNA-synt_2b"/>
    <property type="match status" value="1"/>
</dbReference>
<dbReference type="PIRSF" id="PIRSF001529">
    <property type="entry name" value="Ser-tRNA-synth_IIa"/>
    <property type="match status" value="1"/>
</dbReference>
<dbReference type="PRINTS" id="PR00981">
    <property type="entry name" value="TRNASYNTHSER"/>
</dbReference>
<dbReference type="SUPFAM" id="SSF55681">
    <property type="entry name" value="Class II aaRS and biotin synthetases"/>
    <property type="match status" value="1"/>
</dbReference>
<dbReference type="SUPFAM" id="SSF46589">
    <property type="entry name" value="tRNA-binding arm"/>
    <property type="match status" value="1"/>
</dbReference>
<dbReference type="PROSITE" id="PS50862">
    <property type="entry name" value="AA_TRNA_LIGASE_II"/>
    <property type="match status" value="1"/>
</dbReference>
<sequence length="424" mass="48808">MLDIKFLRTNFEEVKAKLQHRGEDLTDFGRFEELDTRRRELLVQTEELKSKRNEVSQQISVLKREKKDAEALILEMREVGEKVKDFDNELRTVEEDLERLMLSIPNIPHESAPVGETEDDNVVARTWGEVKEFTFEPKPHWDLATDLGILDFERAGKVTGSRFVFYKGAGARLERALISFMLDLHTDEHGYEEVLPPYMVNRASMTGTGQLPKFEEDAFRIESEDYFLIPTAEVPVTNMHRDEILNKEQLPIRYAAFSSCFRSEAGSAGRDTRGLIRQHQFNKVELVKFVKPEDSYEELEKLTNDAERVLQLLELPYRVMSMCTGDLGFTAAKKYDIEVWIPSYGTYREISSCSNFEAFQARRANIRFRREPNGKPEHVHTLNGSGLAIGRTVAAILENYQQEDGTIIIPEVLRPYMGGKTVIK</sequence>
<proteinExistence type="inferred from homology"/>
<name>SYS_BACC2</name>